<organism>
    <name type="scientific">Bacillus licheniformis (strain ATCC 14580 / DSM 13 / JCM 2505 / CCUG 7422 / NBRC 12200 / NCIMB 9375 / NCTC 10341 / NRRL NRS-1264 / Gibson 46)</name>
    <dbReference type="NCBI Taxonomy" id="279010"/>
    <lineage>
        <taxon>Bacteria</taxon>
        <taxon>Bacillati</taxon>
        <taxon>Bacillota</taxon>
        <taxon>Bacilli</taxon>
        <taxon>Bacillales</taxon>
        <taxon>Bacillaceae</taxon>
        <taxon>Bacillus</taxon>
    </lineage>
</organism>
<reference key="1">
    <citation type="journal article" date="2004" name="J. Mol. Microbiol. Biotechnol.">
        <title>The complete genome sequence of Bacillus licheniformis DSM13, an organism with great industrial potential.</title>
        <authorList>
            <person name="Veith B."/>
            <person name="Herzberg C."/>
            <person name="Steckel S."/>
            <person name="Feesche J."/>
            <person name="Maurer K.H."/>
            <person name="Ehrenreich P."/>
            <person name="Baeumer S."/>
            <person name="Henne A."/>
            <person name="Liesegang H."/>
            <person name="Merkl R."/>
            <person name="Ehrenreich A."/>
            <person name="Gottschalk G."/>
        </authorList>
    </citation>
    <scope>NUCLEOTIDE SEQUENCE [LARGE SCALE GENOMIC DNA]</scope>
    <source>
        <strain>ATCC 14580 / DSM 13 / JCM 2505 / CCUG 7422 / NBRC 12200 / NCIMB 9375 / NCTC 10341 / NRRL NRS-1264 / Gibson 46</strain>
    </source>
</reference>
<reference key="2">
    <citation type="journal article" date="2004" name="Genome Biol.">
        <title>Complete genome sequence of the industrial bacterium Bacillus licheniformis and comparisons with closely related Bacillus species.</title>
        <authorList>
            <person name="Rey M.W."/>
            <person name="Ramaiya P."/>
            <person name="Nelson B.A."/>
            <person name="Brody-Karpin S.D."/>
            <person name="Zaretsky E.J."/>
            <person name="Tang M."/>
            <person name="Lopez de Leon A."/>
            <person name="Xiang H."/>
            <person name="Gusti V."/>
            <person name="Clausen I.G."/>
            <person name="Olsen P.B."/>
            <person name="Rasmussen M.D."/>
            <person name="Andersen J.T."/>
            <person name="Joergensen P.L."/>
            <person name="Larsen T.S."/>
            <person name="Sorokin A."/>
            <person name="Bolotin A."/>
            <person name="Lapidus A."/>
            <person name="Galleron N."/>
            <person name="Ehrlich S.D."/>
            <person name="Berka R.M."/>
        </authorList>
    </citation>
    <scope>NUCLEOTIDE SEQUENCE [LARGE SCALE GENOMIC DNA]</scope>
    <source>
        <strain>ATCC 14580 / DSM 13 / JCM 2505 / CCUG 7422 / NBRC 12200 / NCIMB 9375 / NCTC 10341 / NRRL NRS-1264 / Gibson 46</strain>
    </source>
</reference>
<feature type="chain" id="PRO_1000115789" description="Probable molybdenum cofactor guanylyltransferase">
    <location>
        <begin position="1"/>
        <end position="195"/>
    </location>
</feature>
<feature type="binding site" evidence="1">
    <location>
        <begin position="8"/>
        <end position="10"/>
    </location>
    <ligand>
        <name>GTP</name>
        <dbReference type="ChEBI" id="CHEBI:37565"/>
    </ligand>
</feature>
<feature type="binding site" evidence="1">
    <location>
        <position position="20"/>
    </location>
    <ligand>
        <name>GTP</name>
        <dbReference type="ChEBI" id="CHEBI:37565"/>
    </ligand>
</feature>
<feature type="binding site" evidence="1">
    <location>
        <position position="65"/>
    </location>
    <ligand>
        <name>GTP</name>
        <dbReference type="ChEBI" id="CHEBI:37565"/>
    </ligand>
</feature>
<feature type="binding site" evidence="1">
    <location>
        <position position="96"/>
    </location>
    <ligand>
        <name>GTP</name>
        <dbReference type="ChEBI" id="CHEBI:37565"/>
    </ligand>
</feature>
<feature type="binding site" evidence="1">
    <location>
        <position position="96"/>
    </location>
    <ligand>
        <name>Mg(2+)</name>
        <dbReference type="ChEBI" id="CHEBI:18420"/>
    </ligand>
</feature>
<protein>
    <recommendedName>
        <fullName evidence="1">Probable molybdenum cofactor guanylyltransferase</fullName>
        <shortName evidence="1">MoCo guanylyltransferase</shortName>
        <ecNumber evidence="1">2.7.7.77</ecNumber>
    </recommendedName>
    <alternativeName>
        <fullName evidence="1">GTP:molybdopterin guanylyltransferase</fullName>
    </alternativeName>
    <alternativeName>
        <fullName evidence="1">Mo-MPT guanylyltransferase</fullName>
    </alternativeName>
    <alternativeName>
        <fullName evidence="1">Molybdopterin guanylyltransferase</fullName>
    </alternativeName>
    <alternativeName>
        <fullName evidence="1">Molybdopterin-guanine dinucleotide synthase</fullName>
        <shortName evidence="1">MGD synthase</shortName>
    </alternativeName>
</protein>
<evidence type="ECO:0000255" key="1">
    <source>
        <dbReference type="HAMAP-Rule" id="MF_00316"/>
    </source>
</evidence>
<sequence>MKEIHVILSGGLSRRFGEPKAFARWKGKPLYQWCKQALGDDVLILSRPGLTERFIELGEKAVLEDIEPYRGKGPLAGMYTAMERAEGECYIFSACDTPLVRQETISALKRQLTPADDAVVPVADGRAQPLVAVYHRRVKSVLHEQLQQNELKISSFLDRIRVKYIEADAVGAEPWEFINVNKKSDLEEIEPFFPG</sequence>
<proteinExistence type="inferred from homology"/>
<comment type="function">
    <text evidence="1">Transfers a GMP moiety from GTP to Mo-molybdopterin (Mo-MPT) cofactor (Moco or molybdenum cofactor) to form Mo-molybdopterin guanine dinucleotide (Mo-MGD) cofactor.</text>
</comment>
<comment type="catalytic activity">
    <reaction evidence="1">
        <text>Mo-molybdopterin + GTP + H(+) = Mo-molybdopterin guanine dinucleotide + diphosphate</text>
        <dbReference type="Rhea" id="RHEA:34243"/>
        <dbReference type="ChEBI" id="CHEBI:15378"/>
        <dbReference type="ChEBI" id="CHEBI:33019"/>
        <dbReference type="ChEBI" id="CHEBI:37565"/>
        <dbReference type="ChEBI" id="CHEBI:71302"/>
        <dbReference type="ChEBI" id="CHEBI:71310"/>
        <dbReference type="EC" id="2.7.7.77"/>
    </reaction>
</comment>
<comment type="cofactor">
    <cofactor evidence="1">
        <name>Mg(2+)</name>
        <dbReference type="ChEBI" id="CHEBI:18420"/>
    </cofactor>
</comment>
<comment type="subcellular location">
    <subcellularLocation>
        <location evidence="1">Cytoplasm</location>
    </subcellularLocation>
</comment>
<comment type="domain">
    <text evidence="1">The N-terminal domain determines nucleotide recognition and specific binding, while the C-terminal domain determines the specific binding to the target protein.</text>
</comment>
<comment type="similarity">
    <text evidence="1">Belongs to the MobA family.</text>
</comment>
<name>MOBA_BACLD</name>
<gene>
    <name evidence="1" type="primary">mobA</name>
    <name type="ordered locus">BLi01639</name>
    <name type="ordered locus">BL00558</name>
</gene>
<dbReference type="EC" id="2.7.7.77" evidence="1"/>
<dbReference type="EMBL" id="CP000002">
    <property type="protein sequence ID" value="AAU23178.2"/>
    <property type="molecule type" value="Genomic_DNA"/>
</dbReference>
<dbReference type="EMBL" id="AE017333">
    <property type="protein sequence ID" value="AAU40536.1"/>
    <property type="molecule type" value="Genomic_DNA"/>
</dbReference>
<dbReference type="RefSeq" id="WP_003181331.1">
    <property type="nucleotide sequence ID" value="NC_006322.1"/>
</dbReference>
<dbReference type="SMR" id="Q65K78"/>
<dbReference type="STRING" id="279010.BL00558"/>
<dbReference type="GeneID" id="92861766"/>
<dbReference type="KEGG" id="bld:BLi01639"/>
<dbReference type="KEGG" id="bli:BL00558"/>
<dbReference type="eggNOG" id="COG0746">
    <property type="taxonomic scope" value="Bacteria"/>
</dbReference>
<dbReference type="HOGENOM" id="CLU_055597_2_0_9"/>
<dbReference type="Proteomes" id="UP000000606">
    <property type="component" value="Chromosome"/>
</dbReference>
<dbReference type="GO" id="GO:0005737">
    <property type="term" value="C:cytoplasm"/>
    <property type="evidence" value="ECO:0007669"/>
    <property type="project" value="UniProtKB-SubCell"/>
</dbReference>
<dbReference type="GO" id="GO:0005525">
    <property type="term" value="F:GTP binding"/>
    <property type="evidence" value="ECO:0007669"/>
    <property type="project" value="UniProtKB-UniRule"/>
</dbReference>
<dbReference type="GO" id="GO:0046872">
    <property type="term" value="F:metal ion binding"/>
    <property type="evidence" value="ECO:0007669"/>
    <property type="project" value="UniProtKB-KW"/>
</dbReference>
<dbReference type="GO" id="GO:0061603">
    <property type="term" value="F:molybdenum cofactor guanylyltransferase activity"/>
    <property type="evidence" value="ECO:0007669"/>
    <property type="project" value="UniProtKB-EC"/>
</dbReference>
<dbReference type="GO" id="GO:0006777">
    <property type="term" value="P:Mo-molybdopterin cofactor biosynthetic process"/>
    <property type="evidence" value="ECO:0007669"/>
    <property type="project" value="UniProtKB-KW"/>
</dbReference>
<dbReference type="CDD" id="cd02503">
    <property type="entry name" value="MobA"/>
    <property type="match status" value="1"/>
</dbReference>
<dbReference type="Gene3D" id="3.90.550.10">
    <property type="entry name" value="Spore Coat Polysaccharide Biosynthesis Protein SpsA, Chain A"/>
    <property type="match status" value="1"/>
</dbReference>
<dbReference type="HAMAP" id="MF_00316">
    <property type="entry name" value="MobA"/>
    <property type="match status" value="1"/>
</dbReference>
<dbReference type="InterPro" id="IPR025877">
    <property type="entry name" value="MobA-like_NTP_Trfase"/>
</dbReference>
<dbReference type="InterPro" id="IPR013482">
    <property type="entry name" value="Molybde_CF_guanTrfase"/>
</dbReference>
<dbReference type="InterPro" id="IPR029044">
    <property type="entry name" value="Nucleotide-diphossugar_trans"/>
</dbReference>
<dbReference type="PANTHER" id="PTHR19136">
    <property type="entry name" value="MOLYBDENUM COFACTOR GUANYLYLTRANSFERASE"/>
    <property type="match status" value="1"/>
</dbReference>
<dbReference type="PANTHER" id="PTHR19136:SF81">
    <property type="entry name" value="MOLYBDENUM COFACTOR GUANYLYLTRANSFERASE"/>
    <property type="match status" value="1"/>
</dbReference>
<dbReference type="Pfam" id="PF12804">
    <property type="entry name" value="NTP_transf_3"/>
    <property type="match status" value="1"/>
</dbReference>
<dbReference type="SUPFAM" id="SSF53448">
    <property type="entry name" value="Nucleotide-diphospho-sugar transferases"/>
    <property type="match status" value="1"/>
</dbReference>
<accession>Q65K78</accession>
<accession>Q62VN0</accession>
<keyword id="KW-0963">Cytoplasm</keyword>
<keyword id="KW-0342">GTP-binding</keyword>
<keyword id="KW-0460">Magnesium</keyword>
<keyword id="KW-0479">Metal-binding</keyword>
<keyword id="KW-0501">Molybdenum cofactor biosynthesis</keyword>
<keyword id="KW-0547">Nucleotide-binding</keyword>
<keyword id="KW-1185">Reference proteome</keyword>
<keyword id="KW-0808">Transferase</keyword>